<reference key="1">
    <citation type="journal article" date="2010" name="PLoS ONE">
        <title>The complete multipartite genome sequence of Cupriavidus necator JMP134, a versatile pollutant degrader.</title>
        <authorList>
            <person name="Lykidis A."/>
            <person name="Perez-Pantoja D."/>
            <person name="Ledger T."/>
            <person name="Mavromatis K."/>
            <person name="Anderson I.J."/>
            <person name="Ivanova N.N."/>
            <person name="Hooper S.D."/>
            <person name="Lapidus A."/>
            <person name="Lucas S."/>
            <person name="Gonzalez B."/>
            <person name="Kyrpides N.C."/>
        </authorList>
    </citation>
    <scope>NUCLEOTIDE SEQUENCE [LARGE SCALE GENOMIC DNA]</scope>
    <source>
        <strain>JMP134 / LMG 1197</strain>
    </source>
</reference>
<proteinExistence type="inferred from homology"/>
<sequence length="127" mass="13734">MIPSFKSTTQARGALAEDRALAHLQRHGLQPVVRNYRCKGGEIDLVMRAPDGTLVFIEVRQRSASAFGGAAASVTPAKQRRVVLAALHYLSTLAQQPPCRFDVVALAPGRLEWLQHAFDLDTAGEAG</sequence>
<name>Y3265_CUPPJ</name>
<feature type="chain" id="PRO_0000336242" description="UPF0102 protein Reut_A3265">
    <location>
        <begin position="1"/>
        <end position="127"/>
    </location>
</feature>
<protein>
    <recommendedName>
        <fullName evidence="1">UPF0102 protein Reut_A3265</fullName>
    </recommendedName>
</protein>
<accession>Q46W60</accession>
<dbReference type="EMBL" id="CP000090">
    <property type="protein sequence ID" value="AAZ62624.1"/>
    <property type="molecule type" value="Genomic_DNA"/>
</dbReference>
<dbReference type="SMR" id="Q46W60"/>
<dbReference type="STRING" id="264198.Reut_A3265"/>
<dbReference type="KEGG" id="reu:Reut_A3265"/>
<dbReference type="eggNOG" id="COG0792">
    <property type="taxonomic scope" value="Bacteria"/>
</dbReference>
<dbReference type="HOGENOM" id="CLU_115353_1_0_4"/>
<dbReference type="OrthoDB" id="9794876at2"/>
<dbReference type="GO" id="GO:0003676">
    <property type="term" value="F:nucleic acid binding"/>
    <property type="evidence" value="ECO:0007669"/>
    <property type="project" value="InterPro"/>
</dbReference>
<dbReference type="CDD" id="cd20736">
    <property type="entry name" value="PoNe_Nuclease"/>
    <property type="match status" value="1"/>
</dbReference>
<dbReference type="Gene3D" id="3.40.1350.10">
    <property type="match status" value="1"/>
</dbReference>
<dbReference type="HAMAP" id="MF_00048">
    <property type="entry name" value="UPF0102"/>
    <property type="match status" value="1"/>
</dbReference>
<dbReference type="InterPro" id="IPR011335">
    <property type="entry name" value="Restrct_endonuc-II-like"/>
</dbReference>
<dbReference type="InterPro" id="IPR011856">
    <property type="entry name" value="tRNA_endonuc-like_dom_sf"/>
</dbReference>
<dbReference type="InterPro" id="IPR003509">
    <property type="entry name" value="UPF0102_YraN-like"/>
</dbReference>
<dbReference type="NCBIfam" id="NF009150">
    <property type="entry name" value="PRK12497.1-3"/>
    <property type="match status" value="1"/>
</dbReference>
<dbReference type="NCBIfam" id="TIGR00252">
    <property type="entry name" value="YraN family protein"/>
    <property type="match status" value="1"/>
</dbReference>
<dbReference type="PANTHER" id="PTHR34039">
    <property type="entry name" value="UPF0102 PROTEIN YRAN"/>
    <property type="match status" value="1"/>
</dbReference>
<dbReference type="PANTHER" id="PTHR34039:SF1">
    <property type="entry name" value="UPF0102 PROTEIN YRAN"/>
    <property type="match status" value="1"/>
</dbReference>
<dbReference type="Pfam" id="PF02021">
    <property type="entry name" value="UPF0102"/>
    <property type="match status" value="1"/>
</dbReference>
<dbReference type="SUPFAM" id="SSF52980">
    <property type="entry name" value="Restriction endonuclease-like"/>
    <property type="match status" value="1"/>
</dbReference>
<evidence type="ECO:0000255" key="1">
    <source>
        <dbReference type="HAMAP-Rule" id="MF_00048"/>
    </source>
</evidence>
<organism>
    <name type="scientific">Cupriavidus pinatubonensis (strain JMP 134 / LMG 1197)</name>
    <name type="common">Cupriavidus necator (strain JMP 134)</name>
    <dbReference type="NCBI Taxonomy" id="264198"/>
    <lineage>
        <taxon>Bacteria</taxon>
        <taxon>Pseudomonadati</taxon>
        <taxon>Pseudomonadota</taxon>
        <taxon>Betaproteobacteria</taxon>
        <taxon>Burkholderiales</taxon>
        <taxon>Burkholderiaceae</taxon>
        <taxon>Cupriavidus</taxon>
    </lineage>
</organism>
<gene>
    <name type="ordered locus">Reut_A3265</name>
</gene>
<comment type="similarity">
    <text evidence="1">Belongs to the UPF0102 family.</text>
</comment>